<name>ARLR_STAAW</name>
<sequence>MTQILIVEDEQNLARFLELELTHENYNVDTEYDGQDGLDKALSHYYDLIILDLMLPSINGLEICRKIRQQQSTPIIIITAKSDTYDKVAGLDYGADDYIVKPFDIEELLARIRAILRRQPQKDIIDVNGITIDKNAFKVTVNGAEIELTKTEYDLLYLLAENKNHVMQREQILNHVWGYNSEVETNVVDVYIRYLRNKLKPYDRDKMIETVRGVGYVIR</sequence>
<accession>P0C001</accession>
<keyword id="KW-0010">Activator</keyword>
<keyword id="KW-0963">Cytoplasm</keyword>
<keyword id="KW-0238">DNA-binding</keyword>
<keyword id="KW-0597">Phosphoprotein</keyword>
<keyword id="KW-0678">Repressor</keyword>
<keyword id="KW-0804">Transcription</keyword>
<keyword id="KW-0805">Transcription regulation</keyword>
<keyword id="KW-0902">Two-component regulatory system</keyword>
<keyword id="KW-0843">Virulence</keyword>
<dbReference type="EMBL" id="BA000033">
    <property type="protein sequence ID" value="BAB95170.1"/>
    <property type="molecule type" value="Genomic_DNA"/>
</dbReference>
<dbReference type="RefSeq" id="WP_000192137.1">
    <property type="nucleotide sequence ID" value="NC_003923.1"/>
</dbReference>
<dbReference type="SMR" id="P0C001"/>
<dbReference type="CARD" id="ARO:3000838">
    <property type="molecule name" value="arlR"/>
    <property type="mechanism identifier" value="ARO:0010000"/>
    <property type="mechanism name" value="antibiotic efflux"/>
</dbReference>
<dbReference type="KEGG" id="sam:MW1305"/>
<dbReference type="HOGENOM" id="CLU_000445_30_1_9"/>
<dbReference type="GO" id="GO:0005829">
    <property type="term" value="C:cytosol"/>
    <property type="evidence" value="ECO:0007669"/>
    <property type="project" value="TreeGrafter"/>
</dbReference>
<dbReference type="GO" id="GO:0032993">
    <property type="term" value="C:protein-DNA complex"/>
    <property type="evidence" value="ECO:0007669"/>
    <property type="project" value="TreeGrafter"/>
</dbReference>
<dbReference type="GO" id="GO:0000156">
    <property type="term" value="F:phosphorelay response regulator activity"/>
    <property type="evidence" value="ECO:0007669"/>
    <property type="project" value="TreeGrafter"/>
</dbReference>
<dbReference type="GO" id="GO:0000976">
    <property type="term" value="F:transcription cis-regulatory region binding"/>
    <property type="evidence" value="ECO:0007669"/>
    <property type="project" value="TreeGrafter"/>
</dbReference>
<dbReference type="GO" id="GO:0006355">
    <property type="term" value="P:regulation of DNA-templated transcription"/>
    <property type="evidence" value="ECO:0007669"/>
    <property type="project" value="InterPro"/>
</dbReference>
<dbReference type="CDD" id="cd00383">
    <property type="entry name" value="trans_reg_C"/>
    <property type="match status" value="1"/>
</dbReference>
<dbReference type="FunFam" id="3.40.50.2300:FF:000001">
    <property type="entry name" value="DNA-binding response regulator PhoB"/>
    <property type="match status" value="1"/>
</dbReference>
<dbReference type="FunFam" id="1.10.10.10:FF:000005">
    <property type="entry name" value="Two-component system response regulator"/>
    <property type="match status" value="1"/>
</dbReference>
<dbReference type="Gene3D" id="3.40.50.2300">
    <property type="match status" value="1"/>
</dbReference>
<dbReference type="Gene3D" id="6.10.250.690">
    <property type="match status" value="1"/>
</dbReference>
<dbReference type="Gene3D" id="1.10.10.10">
    <property type="entry name" value="Winged helix-like DNA-binding domain superfamily/Winged helix DNA-binding domain"/>
    <property type="match status" value="1"/>
</dbReference>
<dbReference type="InterPro" id="IPR011006">
    <property type="entry name" value="CheY-like_superfamily"/>
</dbReference>
<dbReference type="InterPro" id="IPR001867">
    <property type="entry name" value="OmpR/PhoB-type_DNA-bd"/>
</dbReference>
<dbReference type="InterPro" id="IPR016032">
    <property type="entry name" value="Sig_transdc_resp-reg_C-effctor"/>
</dbReference>
<dbReference type="InterPro" id="IPR001789">
    <property type="entry name" value="Sig_transdc_resp-reg_receiver"/>
</dbReference>
<dbReference type="InterPro" id="IPR039420">
    <property type="entry name" value="WalR-like"/>
</dbReference>
<dbReference type="InterPro" id="IPR036388">
    <property type="entry name" value="WH-like_DNA-bd_sf"/>
</dbReference>
<dbReference type="PANTHER" id="PTHR48111">
    <property type="entry name" value="REGULATOR OF RPOS"/>
    <property type="match status" value="1"/>
</dbReference>
<dbReference type="PANTHER" id="PTHR48111:SF22">
    <property type="entry name" value="REGULATOR OF RPOS"/>
    <property type="match status" value="1"/>
</dbReference>
<dbReference type="Pfam" id="PF00072">
    <property type="entry name" value="Response_reg"/>
    <property type="match status" value="1"/>
</dbReference>
<dbReference type="Pfam" id="PF00486">
    <property type="entry name" value="Trans_reg_C"/>
    <property type="match status" value="1"/>
</dbReference>
<dbReference type="SMART" id="SM00448">
    <property type="entry name" value="REC"/>
    <property type="match status" value="1"/>
</dbReference>
<dbReference type="SMART" id="SM00862">
    <property type="entry name" value="Trans_reg_C"/>
    <property type="match status" value="1"/>
</dbReference>
<dbReference type="SUPFAM" id="SSF46894">
    <property type="entry name" value="C-terminal effector domain of the bipartite response regulators"/>
    <property type="match status" value="1"/>
</dbReference>
<dbReference type="SUPFAM" id="SSF52172">
    <property type="entry name" value="CheY-like"/>
    <property type="match status" value="1"/>
</dbReference>
<dbReference type="PROSITE" id="PS51755">
    <property type="entry name" value="OMPR_PHOB"/>
    <property type="match status" value="1"/>
</dbReference>
<dbReference type="PROSITE" id="PS50110">
    <property type="entry name" value="RESPONSE_REGULATORY"/>
    <property type="match status" value="1"/>
</dbReference>
<feature type="chain" id="PRO_0000081019" description="Response regulator ArlR">
    <location>
        <begin position="1"/>
        <end position="219"/>
    </location>
</feature>
<feature type="domain" description="Response regulatory" evidence="2">
    <location>
        <begin position="3"/>
        <end position="116"/>
    </location>
</feature>
<feature type="DNA-binding region" description="OmpR/PhoB-type" evidence="3">
    <location>
        <begin position="122"/>
        <end position="219"/>
    </location>
</feature>
<feature type="modified residue" description="4-aspartylphosphate" evidence="2">
    <location>
        <position position="52"/>
    </location>
</feature>
<proteinExistence type="inferred from homology"/>
<organism>
    <name type="scientific">Staphylococcus aureus (strain MW2)</name>
    <dbReference type="NCBI Taxonomy" id="196620"/>
    <lineage>
        <taxon>Bacteria</taxon>
        <taxon>Bacillati</taxon>
        <taxon>Bacillota</taxon>
        <taxon>Bacilli</taxon>
        <taxon>Bacillales</taxon>
        <taxon>Staphylococcaceae</taxon>
        <taxon>Staphylococcus</taxon>
    </lineage>
</organism>
<reference key="1">
    <citation type="journal article" date="2002" name="Lancet">
        <title>Genome and virulence determinants of high virulence community-acquired MRSA.</title>
        <authorList>
            <person name="Baba T."/>
            <person name="Takeuchi F."/>
            <person name="Kuroda M."/>
            <person name="Yuzawa H."/>
            <person name="Aoki K."/>
            <person name="Oguchi A."/>
            <person name="Nagai Y."/>
            <person name="Iwama N."/>
            <person name="Asano K."/>
            <person name="Naimi T."/>
            <person name="Kuroda H."/>
            <person name="Cui L."/>
            <person name="Yamamoto K."/>
            <person name="Hiramatsu K."/>
        </authorList>
    </citation>
    <scope>NUCLEOTIDE SEQUENCE [LARGE SCALE GENOMIC DNA]</scope>
    <source>
        <strain>MW2</strain>
    </source>
</reference>
<gene>
    <name type="primary">arlR</name>
    <name type="ordered locus">MW1305</name>
</gene>
<protein>
    <recommendedName>
        <fullName>Response regulator ArlR</fullName>
    </recommendedName>
</protein>
<comment type="function">
    <text evidence="1">Member of the two-component regulatory system ArlS/ArlR involved in the regulation of adhesion, autolysis, multidrug resistance and virulence.</text>
</comment>
<comment type="subcellular location">
    <subcellularLocation>
        <location evidence="1">Cytoplasm</location>
    </subcellularLocation>
</comment>
<comment type="PTM">
    <text evidence="1">Phosphorylated by ArlS.</text>
</comment>
<evidence type="ECO:0000250" key="1"/>
<evidence type="ECO:0000255" key="2">
    <source>
        <dbReference type="PROSITE-ProRule" id="PRU00169"/>
    </source>
</evidence>
<evidence type="ECO:0000255" key="3">
    <source>
        <dbReference type="PROSITE-ProRule" id="PRU01091"/>
    </source>
</evidence>